<reference key="1">
    <citation type="journal article" date="2000" name="Nature">
        <title>Sequence and analysis of chromosome 3 of the plant Arabidopsis thaliana.</title>
        <authorList>
            <person name="Salanoubat M."/>
            <person name="Lemcke K."/>
            <person name="Rieger M."/>
            <person name="Ansorge W."/>
            <person name="Unseld M."/>
            <person name="Fartmann B."/>
            <person name="Valle G."/>
            <person name="Bloecker H."/>
            <person name="Perez-Alonso M."/>
            <person name="Obermaier B."/>
            <person name="Delseny M."/>
            <person name="Boutry M."/>
            <person name="Grivell L.A."/>
            <person name="Mache R."/>
            <person name="Puigdomenech P."/>
            <person name="De Simone V."/>
            <person name="Choisne N."/>
            <person name="Artiguenave F."/>
            <person name="Robert C."/>
            <person name="Brottier P."/>
            <person name="Wincker P."/>
            <person name="Cattolico L."/>
            <person name="Weissenbach J."/>
            <person name="Saurin W."/>
            <person name="Quetier F."/>
            <person name="Schaefer M."/>
            <person name="Mueller-Auer S."/>
            <person name="Gabel C."/>
            <person name="Fuchs M."/>
            <person name="Benes V."/>
            <person name="Wurmbach E."/>
            <person name="Drzonek H."/>
            <person name="Erfle H."/>
            <person name="Jordan N."/>
            <person name="Bangert S."/>
            <person name="Wiedelmann R."/>
            <person name="Kranz H."/>
            <person name="Voss H."/>
            <person name="Holland R."/>
            <person name="Brandt P."/>
            <person name="Nyakatura G."/>
            <person name="Vezzi A."/>
            <person name="D'Angelo M."/>
            <person name="Pallavicini A."/>
            <person name="Toppo S."/>
            <person name="Simionati B."/>
            <person name="Conrad A."/>
            <person name="Hornischer K."/>
            <person name="Kauer G."/>
            <person name="Loehnert T.-H."/>
            <person name="Nordsiek G."/>
            <person name="Reichelt J."/>
            <person name="Scharfe M."/>
            <person name="Schoen O."/>
            <person name="Bargues M."/>
            <person name="Terol J."/>
            <person name="Climent J."/>
            <person name="Navarro P."/>
            <person name="Collado C."/>
            <person name="Perez-Perez A."/>
            <person name="Ottenwaelder B."/>
            <person name="Duchemin D."/>
            <person name="Cooke R."/>
            <person name="Laudie M."/>
            <person name="Berger-Llauro C."/>
            <person name="Purnelle B."/>
            <person name="Masuy D."/>
            <person name="de Haan M."/>
            <person name="Maarse A.C."/>
            <person name="Alcaraz J.-P."/>
            <person name="Cottet A."/>
            <person name="Casacuberta E."/>
            <person name="Monfort A."/>
            <person name="Argiriou A."/>
            <person name="Flores M."/>
            <person name="Liguori R."/>
            <person name="Vitale D."/>
            <person name="Mannhaupt G."/>
            <person name="Haase D."/>
            <person name="Schoof H."/>
            <person name="Rudd S."/>
            <person name="Zaccaria P."/>
            <person name="Mewes H.-W."/>
            <person name="Mayer K.F.X."/>
            <person name="Kaul S."/>
            <person name="Town C.D."/>
            <person name="Koo H.L."/>
            <person name="Tallon L.J."/>
            <person name="Jenkins J."/>
            <person name="Rooney T."/>
            <person name="Rizzo M."/>
            <person name="Walts A."/>
            <person name="Utterback T."/>
            <person name="Fujii C.Y."/>
            <person name="Shea T.P."/>
            <person name="Creasy T.H."/>
            <person name="Haas B."/>
            <person name="Maiti R."/>
            <person name="Wu D."/>
            <person name="Peterson J."/>
            <person name="Van Aken S."/>
            <person name="Pai G."/>
            <person name="Militscher J."/>
            <person name="Sellers P."/>
            <person name="Gill J.E."/>
            <person name="Feldblyum T.V."/>
            <person name="Preuss D."/>
            <person name="Lin X."/>
            <person name="Nierman W.C."/>
            <person name="Salzberg S.L."/>
            <person name="White O."/>
            <person name="Venter J.C."/>
            <person name="Fraser C.M."/>
            <person name="Kaneko T."/>
            <person name="Nakamura Y."/>
            <person name="Sato S."/>
            <person name="Kato T."/>
            <person name="Asamizu E."/>
            <person name="Sasamoto S."/>
            <person name="Kimura T."/>
            <person name="Idesawa K."/>
            <person name="Kawashima K."/>
            <person name="Kishida Y."/>
            <person name="Kiyokawa C."/>
            <person name="Kohara M."/>
            <person name="Matsumoto M."/>
            <person name="Matsuno A."/>
            <person name="Muraki A."/>
            <person name="Nakayama S."/>
            <person name="Nakazaki N."/>
            <person name="Shinpo S."/>
            <person name="Takeuchi C."/>
            <person name="Wada T."/>
            <person name="Watanabe A."/>
            <person name="Yamada M."/>
            <person name="Yasuda M."/>
            <person name="Tabata S."/>
        </authorList>
    </citation>
    <scope>NUCLEOTIDE SEQUENCE [LARGE SCALE GENOMIC DNA]</scope>
    <source>
        <strain>cv. Columbia</strain>
    </source>
</reference>
<reference key="2">
    <citation type="journal article" date="2017" name="Plant J.">
        <title>Araport11: a complete reannotation of the Arabidopsis thaliana reference genome.</title>
        <authorList>
            <person name="Cheng C.Y."/>
            <person name="Krishnakumar V."/>
            <person name="Chan A.P."/>
            <person name="Thibaud-Nissen F."/>
            <person name="Schobel S."/>
            <person name="Town C.D."/>
        </authorList>
    </citation>
    <scope>GENOME REANNOTATION</scope>
    <source>
        <strain>cv. Columbia</strain>
    </source>
</reference>
<reference key="3">
    <citation type="journal article" date="2004" name="Genome Res.">
        <title>Whole genome sequence comparisons and 'full-length' cDNA sequences: a combined approach to evaluate and improve Arabidopsis genome annotation.</title>
        <authorList>
            <person name="Castelli V."/>
            <person name="Aury J.-M."/>
            <person name="Jaillon O."/>
            <person name="Wincker P."/>
            <person name="Clepet C."/>
            <person name="Menard M."/>
            <person name="Cruaud C."/>
            <person name="Quetier F."/>
            <person name="Scarpelli C."/>
            <person name="Schaechter V."/>
            <person name="Temple G."/>
            <person name="Caboche M."/>
            <person name="Weissenbach J."/>
            <person name="Salanoubat M."/>
        </authorList>
    </citation>
    <scope>NUCLEOTIDE SEQUENCE [LARGE SCALE MRNA] (ISOFORM 2)</scope>
    <source>
        <strain>cv. Columbia</strain>
    </source>
</reference>
<reference key="4">
    <citation type="submission" date="2006-07" db="EMBL/GenBank/DDBJ databases">
        <title>Large-scale analysis of RIKEN Arabidopsis full-length (RAFL) cDNAs.</title>
        <authorList>
            <person name="Totoki Y."/>
            <person name="Seki M."/>
            <person name="Ishida J."/>
            <person name="Nakajima M."/>
            <person name="Enju A."/>
            <person name="Kamiya A."/>
            <person name="Narusaka M."/>
            <person name="Shin-i T."/>
            <person name="Nakagawa M."/>
            <person name="Sakamoto N."/>
            <person name="Oishi K."/>
            <person name="Kohara Y."/>
            <person name="Kobayashi M."/>
            <person name="Toyoda A."/>
            <person name="Sakaki Y."/>
            <person name="Sakurai T."/>
            <person name="Iida K."/>
            <person name="Akiyama K."/>
            <person name="Satou M."/>
            <person name="Toyoda T."/>
            <person name="Konagaya A."/>
            <person name="Carninci P."/>
            <person name="Kawai J."/>
            <person name="Hayashizaki Y."/>
            <person name="Shinozaki K."/>
        </authorList>
    </citation>
    <scope>NUCLEOTIDE SEQUENCE [LARGE SCALE MRNA] (ISOFORM 2)</scope>
    <source>
        <strain>cv. Columbia</strain>
    </source>
</reference>
<reference key="5">
    <citation type="journal article" date="2005" name="Plant Physiol.">
        <title>Phylogenomic analysis of the receptor-like proteins of rice and Arabidopsis.</title>
        <authorList>
            <person name="Fritz-Laylin L.K."/>
            <person name="Krishnamurthy N."/>
            <person name="Toer M."/>
            <person name="Sjoelander K.V."/>
            <person name="Jones J.D."/>
        </authorList>
    </citation>
    <scope>GENE FAMILY</scope>
</reference>
<reference key="6">
    <citation type="journal article" date="2008" name="Plant Physiol.">
        <title>A genome-wide functional investigation into the roles of receptor-like proteins in Arabidopsis.</title>
        <authorList>
            <person name="Wang G."/>
            <person name="Ellendorff U."/>
            <person name="Kemp B."/>
            <person name="Mansfield J.W."/>
            <person name="Forsyth A."/>
            <person name="Mitchell K."/>
            <person name="Bastas K."/>
            <person name="Liu C.-M."/>
            <person name="Woods-Toer A."/>
            <person name="Zipfel C."/>
            <person name="de Wit P.J.G.M."/>
            <person name="Jones J.D.G."/>
            <person name="Toer M."/>
            <person name="Thomma B.P.H.J."/>
        </authorList>
    </citation>
    <scope>GENE FAMILY</scope>
    <scope>NOMENCLATURE</scope>
    <source>
        <strain>cv. Columbia</strain>
    </source>
</reference>
<protein>
    <recommendedName>
        <fullName evidence="3">Receptor-like protein 45</fullName>
        <shortName evidence="3">AtRLP45</shortName>
    </recommendedName>
</protein>
<keyword id="KW-0025">Alternative splicing</keyword>
<keyword id="KW-1003">Cell membrane</keyword>
<keyword id="KW-0325">Glycoprotein</keyword>
<keyword id="KW-0433">Leucine-rich repeat</keyword>
<keyword id="KW-0472">Membrane</keyword>
<keyword id="KW-0675">Receptor</keyword>
<keyword id="KW-1185">Reference proteome</keyword>
<keyword id="KW-0677">Repeat</keyword>
<keyword id="KW-0732">Signal</keyword>
<keyword id="KW-0812">Transmembrane</keyword>
<keyword id="KW-1133">Transmembrane helix</keyword>
<name>RLP45_ARATH</name>
<evidence type="ECO:0000255" key="1"/>
<evidence type="ECO:0000255" key="2">
    <source>
        <dbReference type="PROSITE-ProRule" id="PRU00498"/>
    </source>
</evidence>
<evidence type="ECO:0000303" key="3">
    <source>
    </source>
</evidence>
<evidence type="ECO:0000305" key="4"/>
<evidence type="ECO:0000312" key="5">
    <source>
        <dbReference type="Araport" id="AT3G53240"/>
    </source>
</evidence>
<evidence type="ECO:0000312" key="6">
    <source>
        <dbReference type="EMBL" id="CAB64227.1"/>
    </source>
</evidence>
<sequence length="948" mass="107210">MSSSKLMDFGLTWIIMMMILLQGCRSCIESERQGLLEIKAYIISVITDPHLDIRRGWMSSDRSCCHWRRIKCDITSKRVIGISLSLESIRPPDPLPQLNLTFFYPFEELQSLNLSSGYFKGWFDERKGGKGLGSLRNLETLDLGVNFYDTSVLPYLNEAVSLKTLILHDNLFKGGFPVQELINLTSLEVLDLKFNKFSGQLPTQELTNLRNLRALDLSNNKFSGSLQKQGICRLEQLQELRLSRNRFEGEIPLCFSRFSKLRVLDLSSNHLSGKIPYFISDFKSMEYLSLLDNDFEGLFSLGLITELTELKVFKLSSRSGMLQIVETNVSGGLQSQLSSIMLSHCNLGKIPGFLWYQQELRVIDLSNNILSGVFPTWLLENNTELQALLLQNNSFKTLTLPRTMRRLQILDLSVNNFNNQLPKDVGLILASLRHLNLSNNEFLGNMPSSMARMENIEFMDLSYNNFSGKLPRNLFTGCYSLSWLKLSHNRFSGPIIRKSSDETSLITLIMDNNMFTGKIPRTLLNLRMLSVIDLSNNLLTGTIPRWLGNFFLEVLRISNNRLQGAIPPSLFNIPYLWLLDLSGNFLSGSLPLRSSSDYGYILDLHNNNLTGSIPDTLWYGLRLLDLRNNKLSGNIPLFRSTPSISVVLLRENNLTGKIPVELCGLSNVRMLDFAHNRLNESIPSCVTNLSFGSGGHSNADSDWYPASLLSNFMEIYTEVYYESLIVSDRFSLDYSVDFNVQVEFAVKQRYDLYMRGTLNQMFGLDLSSNELSGNIPEELGDLKRVRSLNLSRNSLSGSIPGSFSNLRSIESLDLSFNKLHGTIPSQLTLLQSLVVFNVSYNNLSGVIPQGKQFNTFGEKSYLGNFLLCGSPTKRSCGGTTISSGKEYEDDDESGLLDIVVLWWSLGTTYVTVMMGFLVFLCFDSPWRRAWFCLVDTFIDRVKDVLGVI</sequence>
<organism>
    <name type="scientific">Arabidopsis thaliana</name>
    <name type="common">Mouse-ear cress</name>
    <dbReference type="NCBI Taxonomy" id="3702"/>
    <lineage>
        <taxon>Eukaryota</taxon>
        <taxon>Viridiplantae</taxon>
        <taxon>Streptophyta</taxon>
        <taxon>Embryophyta</taxon>
        <taxon>Tracheophyta</taxon>
        <taxon>Spermatophyta</taxon>
        <taxon>Magnoliopsida</taxon>
        <taxon>eudicotyledons</taxon>
        <taxon>Gunneridae</taxon>
        <taxon>Pentapetalae</taxon>
        <taxon>rosids</taxon>
        <taxon>malvids</taxon>
        <taxon>Brassicales</taxon>
        <taxon>Brassicaceae</taxon>
        <taxon>Camelineae</taxon>
        <taxon>Arabidopsis</taxon>
    </lineage>
</organism>
<comment type="subcellular location">
    <subcellularLocation>
        <location evidence="4">Cell membrane</location>
        <topology evidence="4">Single-pass type I membrane protein</topology>
    </subcellularLocation>
</comment>
<comment type="alternative products">
    <event type="alternative splicing"/>
    <isoform>
        <id>F4J9A8-1</id>
        <name>1</name>
        <sequence type="displayed"/>
    </isoform>
    <isoform>
        <id>F4J9A8-2</id>
        <name>2</name>
        <sequence type="described" ref="VSP_059569"/>
    </isoform>
</comment>
<comment type="similarity">
    <text evidence="4">Belongs to the RLP family.</text>
</comment>
<comment type="sequence caution" evidence="4">
    <conflict type="erroneous initiation">
        <sequence resource="EMBL-CDS" id="ANM63480"/>
    </conflict>
    <text>Truncated N-terminus.</text>
</comment>
<comment type="sequence caution" evidence="4">
    <conflict type="erroneous gene model prediction">
        <sequence resource="EMBL-CDS" id="CAB64227"/>
    </conflict>
</comment>
<feature type="signal peptide" evidence="1">
    <location>
        <begin position="1"/>
        <end position="26"/>
    </location>
</feature>
<feature type="chain" id="PRO_0000444114" description="Receptor-like protein 45">
    <location>
        <begin position="27"/>
        <end position="948"/>
    </location>
</feature>
<feature type="topological domain" description="Extracellular" evidence="1">
    <location>
        <begin position="27"/>
        <end position="897"/>
    </location>
</feature>
<feature type="transmembrane region" description="Helical" evidence="1">
    <location>
        <begin position="898"/>
        <end position="918"/>
    </location>
</feature>
<feature type="topological domain" description="Cytoplasmic" evidence="1">
    <location>
        <begin position="919"/>
        <end position="948"/>
    </location>
</feature>
<feature type="repeat" description="LRR 1" evidence="1">
    <location>
        <begin position="106"/>
        <end position="129"/>
    </location>
</feature>
<feature type="repeat" description="LRR 2" evidence="1">
    <location>
        <begin position="135"/>
        <end position="162"/>
    </location>
</feature>
<feature type="repeat" description="LRR 3; degenerate" evidence="4">
    <location>
        <begin position="163"/>
        <end position="183"/>
    </location>
</feature>
<feature type="repeat" description="LRR 4" evidence="1">
    <location>
        <begin position="184"/>
        <end position="208"/>
    </location>
</feature>
<feature type="repeat" description="LRR 5" evidence="1">
    <location>
        <begin position="210"/>
        <end position="233"/>
    </location>
</feature>
<feature type="repeat" description="LRR 6" evidence="1">
    <location>
        <begin position="234"/>
        <end position="257"/>
    </location>
</feature>
<feature type="repeat" description="LRR 7" evidence="1">
    <location>
        <begin position="258"/>
        <end position="284"/>
    </location>
</feature>
<feature type="repeat" description="LRR 8" evidence="1">
    <location>
        <begin position="286"/>
        <end position="306"/>
    </location>
</feature>
<feature type="repeat" description="LRR 9" evidence="1">
    <location>
        <begin position="307"/>
        <end position="332"/>
    </location>
</feature>
<feature type="repeat" description="LRR 10" evidence="1">
    <location>
        <begin position="334"/>
        <end position="357"/>
    </location>
</feature>
<feature type="repeat" description="LRR 11" evidence="1">
    <location>
        <begin position="358"/>
        <end position="381"/>
    </location>
</feature>
<feature type="repeat" description="LRR 12" evidence="1">
    <location>
        <begin position="382"/>
        <end position="404"/>
    </location>
</feature>
<feature type="repeat" description="LRR 13" evidence="1">
    <location>
        <begin position="405"/>
        <end position="429"/>
    </location>
</feature>
<feature type="repeat" description="LRR 14" evidence="1">
    <location>
        <begin position="430"/>
        <end position="453"/>
    </location>
</feature>
<feature type="repeat" description="LRR 15" evidence="1">
    <location>
        <begin position="454"/>
        <end position="477"/>
    </location>
</feature>
<feature type="repeat" description="LRR 16" evidence="1">
    <location>
        <begin position="479"/>
        <end position="502"/>
    </location>
</feature>
<feature type="repeat" description="LRR 17" evidence="1">
    <location>
        <begin position="503"/>
        <end position="526"/>
    </location>
</feature>
<feature type="repeat" description="LRR 18" evidence="1">
    <location>
        <begin position="527"/>
        <end position="549"/>
    </location>
</feature>
<feature type="repeat" description="LRR 19" evidence="1">
    <location>
        <begin position="550"/>
        <end position="573"/>
    </location>
</feature>
<feature type="repeat" description="LRR 20" evidence="1">
    <location>
        <begin position="575"/>
        <end position="595"/>
    </location>
</feature>
<feature type="repeat" description="LRR 21" evidence="1">
    <location>
        <begin position="596"/>
        <end position="618"/>
    </location>
</feature>
<feature type="repeat" description="LRR 22" evidence="1">
    <location>
        <begin position="619"/>
        <end position="640"/>
    </location>
</feature>
<feature type="repeat" description="LRR 23" evidence="1">
    <location>
        <begin position="642"/>
        <end position="665"/>
    </location>
</feature>
<feature type="repeat" description="LRR 24" evidence="1">
    <location>
        <begin position="666"/>
        <end position="689"/>
    </location>
</feature>
<feature type="repeat" description="LRR 25" evidence="1">
    <location>
        <begin position="758"/>
        <end position="782"/>
    </location>
</feature>
<feature type="repeat" description="LRR 26" evidence="1">
    <location>
        <begin position="783"/>
        <end position="805"/>
    </location>
</feature>
<feature type="repeat" description="LRR 27" evidence="1">
    <location>
        <begin position="807"/>
        <end position="831"/>
    </location>
</feature>
<feature type="repeat" description="LRR 28" evidence="1">
    <location>
        <begin position="833"/>
        <end position="855"/>
    </location>
</feature>
<feature type="glycosylation site" description="N-linked (GlcNAc...) asparagine" evidence="2">
    <location>
        <position position="99"/>
    </location>
</feature>
<feature type="glycosylation site" description="N-linked (GlcNAc...) asparagine" evidence="2">
    <location>
        <position position="113"/>
    </location>
</feature>
<feature type="glycosylation site" description="N-linked (GlcNAc...) asparagine" evidence="2">
    <location>
        <position position="183"/>
    </location>
</feature>
<feature type="glycosylation site" description="N-linked (GlcNAc...) asparagine" evidence="2">
    <location>
        <position position="328"/>
    </location>
</feature>
<feature type="glycosylation site" description="N-linked (GlcNAc...) asparagine" evidence="2">
    <location>
        <position position="381"/>
    </location>
</feature>
<feature type="glycosylation site" description="N-linked (GlcNAc...) asparagine" evidence="2">
    <location>
        <position position="392"/>
    </location>
</feature>
<feature type="glycosylation site" description="N-linked (GlcNAc...) asparagine" evidence="2">
    <location>
        <position position="436"/>
    </location>
</feature>
<feature type="glycosylation site" description="N-linked (GlcNAc...) asparagine" evidence="2">
    <location>
        <position position="465"/>
    </location>
</feature>
<feature type="glycosylation site" description="N-linked (GlcNAc...) asparagine" evidence="2">
    <location>
        <position position="608"/>
    </location>
</feature>
<feature type="glycosylation site" description="N-linked (GlcNAc...) asparagine" evidence="2">
    <location>
        <position position="653"/>
    </location>
</feature>
<feature type="glycosylation site" description="N-linked (GlcNAc...) asparagine" evidence="2">
    <location>
        <position position="679"/>
    </location>
</feature>
<feature type="glycosylation site" description="N-linked (GlcNAc...) asparagine" evidence="2">
    <location>
        <position position="688"/>
    </location>
</feature>
<feature type="glycosylation site" description="N-linked (GlcNAc...) asparagine" evidence="2">
    <location>
        <position position="789"/>
    </location>
</feature>
<feature type="glycosylation site" description="N-linked (GlcNAc...) asparagine" evidence="2">
    <location>
        <position position="837"/>
    </location>
</feature>
<feature type="glycosylation site" description="N-linked (GlcNAc...) asparagine" evidence="2">
    <location>
        <position position="842"/>
    </location>
</feature>
<feature type="splice variant" id="VSP_059569" description="In isoform 2.">
    <location>
        <begin position="1"/>
        <end position="57"/>
    </location>
</feature>
<feature type="sequence conflict" description="In Ref. 3; BX822972." evidence="4" ref="3">
    <original>E</original>
    <variation>K</variation>
    <location>
        <position position="235"/>
    </location>
</feature>
<feature type="sequence conflict" description="In Ref. 4; BAF02201." evidence="4" ref="4">
    <original>F</original>
    <variation>S</variation>
    <location>
        <position position="550"/>
    </location>
</feature>
<feature type="sequence conflict" description="In Ref. 4; BAF02201." evidence="4" ref="4">
    <original>L</original>
    <variation>P</variation>
    <location>
        <position position="555"/>
    </location>
</feature>
<feature type="sequence conflict" description="In Ref. 3; BX822972." evidence="4" ref="3">
    <original>H</original>
    <variation>L</variation>
    <location>
        <position position="605"/>
    </location>
</feature>
<feature type="sequence conflict" description="In Ref. 3; BX822972." evidence="4" ref="3">
    <original>R</original>
    <variation>I</variation>
    <location>
        <position position="755"/>
    </location>
</feature>
<accession>F4J9A8</accession>
<accession>Q0WL06</accession>
<accession>Q9SCN7</accession>
<dbReference type="EMBL" id="AL132958">
    <property type="protein sequence ID" value="CAB64227.1"/>
    <property type="status" value="ALT_SEQ"/>
    <property type="molecule type" value="Genomic_DNA"/>
</dbReference>
<dbReference type="EMBL" id="CP002686">
    <property type="protein sequence ID" value="AEE79052.1"/>
    <property type="molecule type" value="Genomic_DNA"/>
</dbReference>
<dbReference type="EMBL" id="CP002686">
    <property type="protein sequence ID" value="ANM63480.1"/>
    <property type="status" value="ALT_INIT"/>
    <property type="molecule type" value="Genomic_DNA"/>
</dbReference>
<dbReference type="EMBL" id="BX822972">
    <property type="status" value="NOT_ANNOTATED_CDS"/>
    <property type="molecule type" value="mRNA"/>
</dbReference>
<dbReference type="EMBL" id="AK230403">
    <property type="protein sequence ID" value="BAF02201.1"/>
    <property type="molecule type" value="mRNA"/>
</dbReference>
<dbReference type="PIR" id="T46170">
    <property type="entry name" value="T46170"/>
</dbReference>
<dbReference type="RefSeq" id="NP_001325566.1">
    <molecule id="F4J9A8-2"/>
    <property type="nucleotide sequence ID" value="NM_001339603.1"/>
</dbReference>
<dbReference type="RefSeq" id="NP_190892.3">
    <molecule id="F4J9A8-2"/>
    <property type="nucleotide sequence ID" value="NM_115184.5"/>
</dbReference>
<dbReference type="SMR" id="F4J9A8"/>
<dbReference type="FunCoup" id="F4J9A8">
    <property type="interactions" value="1383"/>
</dbReference>
<dbReference type="STRING" id="3702.F4J9A8"/>
<dbReference type="GlyCosmos" id="F4J9A8">
    <property type="glycosylation" value="15 sites, No reported glycans"/>
</dbReference>
<dbReference type="GlyGen" id="F4J9A8">
    <property type="glycosylation" value="15 sites"/>
</dbReference>
<dbReference type="PaxDb" id="3702-AT3G53240.1"/>
<dbReference type="EnsemblPlants" id="AT3G53240.1">
    <molecule id="F4J9A8-2"/>
    <property type="protein sequence ID" value="AT3G53240.1"/>
    <property type="gene ID" value="AT3G53240"/>
</dbReference>
<dbReference type="EnsemblPlants" id="AT3G53240.3">
    <molecule id="F4J9A8-2"/>
    <property type="protein sequence ID" value="AT3G53240.3"/>
    <property type="gene ID" value="AT3G53240"/>
</dbReference>
<dbReference type="GeneID" id="824491"/>
<dbReference type="Gramene" id="AT3G53240.1">
    <molecule id="F4J9A8-2"/>
    <property type="protein sequence ID" value="AT3G53240.1"/>
    <property type="gene ID" value="AT3G53240"/>
</dbReference>
<dbReference type="Gramene" id="AT3G53240.3">
    <molecule id="F4J9A8-2"/>
    <property type="protein sequence ID" value="AT3G53240.3"/>
    <property type="gene ID" value="AT3G53240"/>
</dbReference>
<dbReference type="KEGG" id="ath:AT3G53240"/>
<dbReference type="Araport" id="AT3G53240"/>
<dbReference type="TAIR" id="AT3G53240">
    <property type="gene designation" value="RLP45"/>
</dbReference>
<dbReference type="HOGENOM" id="CLU_000288_18_3_1"/>
<dbReference type="InParanoid" id="F4J9A8"/>
<dbReference type="OMA" id="YKSHERF"/>
<dbReference type="PRO" id="PR:F4J9A8"/>
<dbReference type="Proteomes" id="UP000006548">
    <property type="component" value="Chromosome 3"/>
</dbReference>
<dbReference type="ExpressionAtlas" id="F4J9A8">
    <property type="expression patterns" value="baseline and differential"/>
</dbReference>
<dbReference type="GO" id="GO:0005886">
    <property type="term" value="C:plasma membrane"/>
    <property type="evidence" value="ECO:0007669"/>
    <property type="project" value="UniProtKB-SubCell"/>
</dbReference>
<dbReference type="FunFam" id="3.80.10.10:FF:001999">
    <property type="entry name" value="Receptor like protein 45"/>
    <property type="match status" value="1"/>
</dbReference>
<dbReference type="FunFam" id="3.80.10.10:FF:002794">
    <property type="entry name" value="Receptor like protein 45"/>
    <property type="match status" value="1"/>
</dbReference>
<dbReference type="Gene3D" id="3.80.10.10">
    <property type="entry name" value="Ribonuclease Inhibitor"/>
    <property type="match status" value="7"/>
</dbReference>
<dbReference type="InterPro" id="IPR053211">
    <property type="entry name" value="DNA_repair-toleration"/>
</dbReference>
<dbReference type="InterPro" id="IPR001611">
    <property type="entry name" value="Leu-rich_rpt"/>
</dbReference>
<dbReference type="InterPro" id="IPR003591">
    <property type="entry name" value="Leu-rich_rpt_typical-subtyp"/>
</dbReference>
<dbReference type="InterPro" id="IPR032675">
    <property type="entry name" value="LRR_dom_sf"/>
</dbReference>
<dbReference type="InterPro" id="IPR013210">
    <property type="entry name" value="LRR_N_plant-typ"/>
</dbReference>
<dbReference type="InterPro" id="IPR013101">
    <property type="entry name" value="LRR_PRU1-like"/>
</dbReference>
<dbReference type="PANTHER" id="PTHR48060">
    <property type="entry name" value="DNA DAMAGE-REPAIR/TOLERATION PROTEIN DRT100"/>
    <property type="match status" value="1"/>
</dbReference>
<dbReference type="PANTHER" id="PTHR48060:SF21">
    <property type="entry name" value="L DOMAIN-LIKE PROTEIN"/>
    <property type="match status" value="1"/>
</dbReference>
<dbReference type="Pfam" id="PF00560">
    <property type="entry name" value="LRR_1"/>
    <property type="match status" value="5"/>
</dbReference>
<dbReference type="Pfam" id="PF07723">
    <property type="entry name" value="LRR_2"/>
    <property type="match status" value="1"/>
</dbReference>
<dbReference type="Pfam" id="PF13855">
    <property type="entry name" value="LRR_8"/>
    <property type="match status" value="3"/>
</dbReference>
<dbReference type="Pfam" id="PF08263">
    <property type="entry name" value="LRRNT_2"/>
    <property type="match status" value="1"/>
</dbReference>
<dbReference type="PRINTS" id="PR00019">
    <property type="entry name" value="LEURICHRPT"/>
</dbReference>
<dbReference type="SMART" id="SM00369">
    <property type="entry name" value="LRR_TYP"/>
    <property type="match status" value="11"/>
</dbReference>
<dbReference type="SUPFAM" id="SSF52058">
    <property type="entry name" value="L domain-like"/>
    <property type="match status" value="3"/>
</dbReference>
<proteinExistence type="evidence at transcript level"/>
<gene>
    <name evidence="3" type="primary">RLP45</name>
    <name evidence="5" type="ordered locus">At3g53240</name>
    <name evidence="6" type="ORF">T4D2.170</name>
</gene>